<organism>
    <name type="scientific">Buchnera aphidicola subsp. Baizongia pistaciae (strain Bp)</name>
    <dbReference type="NCBI Taxonomy" id="224915"/>
    <lineage>
        <taxon>Bacteria</taxon>
        <taxon>Pseudomonadati</taxon>
        <taxon>Pseudomonadota</taxon>
        <taxon>Gammaproteobacteria</taxon>
        <taxon>Enterobacterales</taxon>
        <taxon>Erwiniaceae</taxon>
        <taxon>Buchnera</taxon>
    </lineage>
</organism>
<keyword id="KW-0067">ATP-binding</keyword>
<keyword id="KW-0963">Cytoplasm</keyword>
<keyword id="KW-0418">Kinase</keyword>
<keyword id="KW-0545">Nucleotide biosynthesis</keyword>
<keyword id="KW-0547">Nucleotide-binding</keyword>
<keyword id="KW-1185">Reference proteome</keyword>
<keyword id="KW-0808">Transferase</keyword>
<dbReference type="EC" id="2.7.4.3" evidence="1"/>
<dbReference type="EMBL" id="AE016826">
    <property type="protein sequence ID" value="AAO27138.1"/>
    <property type="molecule type" value="Genomic_DNA"/>
</dbReference>
<dbReference type="RefSeq" id="WP_011091539.1">
    <property type="nucleotide sequence ID" value="NC_004545.1"/>
</dbReference>
<dbReference type="SMR" id="P59429"/>
<dbReference type="STRING" id="224915.bbp_428"/>
<dbReference type="KEGG" id="bab:bbp_428"/>
<dbReference type="eggNOG" id="COG0563">
    <property type="taxonomic scope" value="Bacteria"/>
</dbReference>
<dbReference type="HOGENOM" id="CLU_032354_1_2_6"/>
<dbReference type="OrthoDB" id="9805030at2"/>
<dbReference type="UniPathway" id="UPA00588">
    <property type="reaction ID" value="UER00649"/>
</dbReference>
<dbReference type="Proteomes" id="UP000000601">
    <property type="component" value="Chromosome"/>
</dbReference>
<dbReference type="GO" id="GO:0005737">
    <property type="term" value="C:cytoplasm"/>
    <property type="evidence" value="ECO:0007669"/>
    <property type="project" value="UniProtKB-SubCell"/>
</dbReference>
<dbReference type="GO" id="GO:0004017">
    <property type="term" value="F:adenylate kinase activity"/>
    <property type="evidence" value="ECO:0007669"/>
    <property type="project" value="UniProtKB-UniRule"/>
</dbReference>
<dbReference type="GO" id="GO:0005524">
    <property type="term" value="F:ATP binding"/>
    <property type="evidence" value="ECO:0007669"/>
    <property type="project" value="UniProtKB-UniRule"/>
</dbReference>
<dbReference type="GO" id="GO:0044209">
    <property type="term" value="P:AMP salvage"/>
    <property type="evidence" value="ECO:0007669"/>
    <property type="project" value="UniProtKB-UniRule"/>
</dbReference>
<dbReference type="CDD" id="cd01428">
    <property type="entry name" value="ADK"/>
    <property type="match status" value="1"/>
</dbReference>
<dbReference type="Gene3D" id="3.40.50.300">
    <property type="entry name" value="P-loop containing nucleotide triphosphate hydrolases"/>
    <property type="match status" value="1"/>
</dbReference>
<dbReference type="HAMAP" id="MF_00235">
    <property type="entry name" value="Adenylate_kinase_Adk"/>
    <property type="match status" value="1"/>
</dbReference>
<dbReference type="InterPro" id="IPR006259">
    <property type="entry name" value="Adenyl_kin_sub"/>
</dbReference>
<dbReference type="InterPro" id="IPR000850">
    <property type="entry name" value="Adenylat/UMP-CMP_kin"/>
</dbReference>
<dbReference type="InterPro" id="IPR033690">
    <property type="entry name" value="Adenylat_kinase_CS"/>
</dbReference>
<dbReference type="InterPro" id="IPR027417">
    <property type="entry name" value="P-loop_NTPase"/>
</dbReference>
<dbReference type="NCBIfam" id="TIGR01351">
    <property type="entry name" value="adk"/>
    <property type="match status" value="1"/>
</dbReference>
<dbReference type="PANTHER" id="PTHR23359">
    <property type="entry name" value="NUCLEOTIDE KINASE"/>
    <property type="match status" value="1"/>
</dbReference>
<dbReference type="Pfam" id="PF00406">
    <property type="entry name" value="ADK"/>
    <property type="match status" value="1"/>
</dbReference>
<dbReference type="PRINTS" id="PR00094">
    <property type="entry name" value="ADENYLTKNASE"/>
</dbReference>
<dbReference type="SUPFAM" id="SSF52540">
    <property type="entry name" value="P-loop containing nucleoside triphosphate hydrolases"/>
    <property type="match status" value="1"/>
</dbReference>
<dbReference type="PROSITE" id="PS00113">
    <property type="entry name" value="ADENYLATE_KINASE"/>
    <property type="match status" value="1"/>
</dbReference>
<protein>
    <recommendedName>
        <fullName evidence="1">Adenylate kinase</fullName>
        <shortName evidence="1">AK</shortName>
        <ecNumber evidence="1">2.7.4.3</ecNumber>
    </recommendedName>
    <alternativeName>
        <fullName evidence="1">ATP-AMP transphosphorylase</fullName>
    </alternativeName>
    <alternativeName>
        <fullName evidence="1">ATP:AMP phosphotransferase</fullName>
    </alternativeName>
    <alternativeName>
        <fullName evidence="1">Adenylate monophosphate kinase</fullName>
    </alternativeName>
</protein>
<proteinExistence type="inferred from homology"/>
<accession>P59429</accession>
<evidence type="ECO:0000255" key="1">
    <source>
        <dbReference type="HAMAP-Rule" id="MF_00235"/>
    </source>
</evidence>
<name>KAD_BUCBP</name>
<comment type="function">
    <text evidence="1">Catalyzes the reversible transfer of the terminal phosphate group between ATP and AMP. Plays an important role in cellular energy homeostasis and in adenine nucleotide metabolism.</text>
</comment>
<comment type="catalytic activity">
    <reaction evidence="1">
        <text>AMP + ATP = 2 ADP</text>
        <dbReference type="Rhea" id="RHEA:12973"/>
        <dbReference type="ChEBI" id="CHEBI:30616"/>
        <dbReference type="ChEBI" id="CHEBI:456215"/>
        <dbReference type="ChEBI" id="CHEBI:456216"/>
        <dbReference type="EC" id="2.7.4.3"/>
    </reaction>
</comment>
<comment type="pathway">
    <text evidence="1">Purine metabolism; AMP biosynthesis via salvage pathway; AMP from ADP: step 1/1.</text>
</comment>
<comment type="subunit">
    <text evidence="1">Monomer.</text>
</comment>
<comment type="subcellular location">
    <subcellularLocation>
        <location evidence="1">Cytoplasm</location>
    </subcellularLocation>
</comment>
<comment type="domain">
    <text evidence="1">Consists of three domains, a large central CORE domain and two small peripheral domains, NMPbind and LID, which undergo movements during catalysis. The LID domain closes over the site of phosphoryl transfer upon ATP binding. Assembling and dissambling the active center during each catalytic cycle provides an effective means to prevent ATP hydrolysis.</text>
</comment>
<comment type="similarity">
    <text evidence="1">Belongs to the adenylate kinase family.</text>
</comment>
<reference key="1">
    <citation type="journal article" date="2003" name="Proc. Natl. Acad. Sci. U.S.A.">
        <title>Reductive genome evolution in Buchnera aphidicola.</title>
        <authorList>
            <person name="van Ham R.C.H.J."/>
            <person name="Kamerbeek J."/>
            <person name="Palacios C."/>
            <person name="Rausell C."/>
            <person name="Abascal F."/>
            <person name="Bastolla U."/>
            <person name="Fernandez J.M."/>
            <person name="Jimenez L."/>
            <person name="Postigo M."/>
            <person name="Silva F.J."/>
            <person name="Tamames J."/>
            <person name="Viguera E."/>
            <person name="Latorre A."/>
            <person name="Valencia A."/>
            <person name="Moran F."/>
            <person name="Moya A."/>
        </authorList>
    </citation>
    <scope>NUCLEOTIDE SEQUENCE [LARGE SCALE GENOMIC DNA]</scope>
    <source>
        <strain>Bp</strain>
    </source>
</reference>
<gene>
    <name evidence="1" type="primary">adk</name>
    <name type="ordered locus">bbp_428</name>
</gene>
<feature type="chain" id="PRO_0000158745" description="Adenylate kinase">
    <location>
        <begin position="1"/>
        <end position="215"/>
    </location>
</feature>
<feature type="region of interest" description="NMP" evidence="1">
    <location>
        <begin position="30"/>
        <end position="59"/>
    </location>
</feature>
<feature type="region of interest" description="LID">
    <location>
        <begin position="122"/>
        <end position="157"/>
    </location>
</feature>
<feature type="binding site" evidence="1">
    <location>
        <begin position="10"/>
        <end position="15"/>
    </location>
    <ligand>
        <name>ATP</name>
        <dbReference type="ChEBI" id="CHEBI:30616"/>
    </ligand>
</feature>
<feature type="binding site" evidence="1">
    <location>
        <position position="31"/>
    </location>
    <ligand>
        <name>AMP</name>
        <dbReference type="ChEBI" id="CHEBI:456215"/>
    </ligand>
</feature>
<feature type="binding site" evidence="1">
    <location>
        <position position="36"/>
    </location>
    <ligand>
        <name>AMP</name>
        <dbReference type="ChEBI" id="CHEBI:456215"/>
    </ligand>
</feature>
<feature type="binding site" evidence="1">
    <location>
        <begin position="57"/>
        <end position="59"/>
    </location>
    <ligand>
        <name>AMP</name>
        <dbReference type="ChEBI" id="CHEBI:456215"/>
    </ligand>
</feature>
<feature type="binding site" evidence="1">
    <location>
        <begin position="85"/>
        <end position="88"/>
    </location>
    <ligand>
        <name>AMP</name>
        <dbReference type="ChEBI" id="CHEBI:456215"/>
    </ligand>
</feature>
<feature type="binding site" evidence="1">
    <location>
        <position position="92"/>
    </location>
    <ligand>
        <name>AMP</name>
        <dbReference type="ChEBI" id="CHEBI:456215"/>
    </ligand>
</feature>
<feature type="binding site" evidence="1">
    <location>
        <position position="123"/>
    </location>
    <ligand>
        <name>ATP</name>
        <dbReference type="ChEBI" id="CHEBI:30616"/>
    </ligand>
</feature>
<feature type="binding site" evidence="1">
    <location>
        <begin position="132"/>
        <end position="133"/>
    </location>
    <ligand>
        <name>ATP</name>
        <dbReference type="ChEBI" id="CHEBI:30616"/>
    </ligand>
</feature>
<feature type="binding site" evidence="1">
    <location>
        <position position="154"/>
    </location>
    <ligand>
        <name>AMP</name>
        <dbReference type="ChEBI" id="CHEBI:456215"/>
    </ligand>
</feature>
<feature type="binding site" evidence="1">
    <location>
        <position position="165"/>
    </location>
    <ligand>
        <name>AMP</name>
        <dbReference type="ChEBI" id="CHEBI:456215"/>
    </ligand>
</feature>
<feature type="binding site" evidence="1">
    <location>
        <position position="198"/>
    </location>
    <ligand>
        <name>ATP</name>
        <dbReference type="ChEBI" id="CHEBI:30616"/>
    </ligand>
</feature>
<sequence>MHIVLIGGPGTGKGTQAELLSKKYMLPVISTGHILRKISTKKTLFGEKIKNIINSGKLVPDTIIIKIITNEILHKNYTNGFILDGFPRTIKQAKNLKNTNIQIDYVFEFILPTKLIFKRIQTRTINPITGTIYNNVIQKNSELKNLKINTLKSRLDDQYPIILKRLKEHKKNIVYLKDFYINEQKHKSLKYHEINSQNTIKNVNIEIKKILENKL</sequence>